<evidence type="ECO:0000255" key="1">
    <source>
        <dbReference type="PROSITE-ProRule" id="PRU00042"/>
    </source>
</evidence>
<evidence type="ECO:0000303" key="2">
    <source>
    </source>
</evidence>
<evidence type="ECO:0000305" key="3"/>
<evidence type="ECO:0007744" key="4">
    <source>
    </source>
</evidence>
<protein>
    <recommendedName>
        <fullName>Zinc finger protein 134</fullName>
    </recommendedName>
</protein>
<organism>
    <name type="scientific">Homo sapiens</name>
    <name type="common">Human</name>
    <dbReference type="NCBI Taxonomy" id="9606"/>
    <lineage>
        <taxon>Eukaryota</taxon>
        <taxon>Metazoa</taxon>
        <taxon>Chordata</taxon>
        <taxon>Craniata</taxon>
        <taxon>Vertebrata</taxon>
        <taxon>Euteleostomi</taxon>
        <taxon>Mammalia</taxon>
        <taxon>Eutheria</taxon>
        <taxon>Euarchontoglires</taxon>
        <taxon>Primates</taxon>
        <taxon>Haplorrhini</taxon>
        <taxon>Catarrhini</taxon>
        <taxon>Hominidae</taxon>
        <taxon>Homo</taxon>
    </lineage>
</organism>
<accession>P52741</accession>
<accession>Q9Y4B2</accession>
<name>ZN134_HUMAN</name>
<comment type="function">
    <text>May be involved in transcriptional regulation.</text>
</comment>
<comment type="interaction">
    <interactant intactId="EBI-18054945">
        <id>P52741</id>
    </interactant>
    <interactant intactId="EBI-1048159">
        <id>P55081</id>
        <label>MFAP1</label>
    </interactant>
    <organismsDiffer>false</organismsDiffer>
    <experiments>3</experiments>
</comment>
<comment type="interaction">
    <interactant intactId="EBI-18054945">
        <id>P52741</id>
    </interactant>
    <interactant intactId="EBI-949753">
        <id>Q63HR2</id>
        <label>TNS2</label>
    </interactant>
    <organismsDiffer>false</organismsDiffer>
    <experiments>3</experiments>
</comment>
<comment type="interaction">
    <interactant intactId="EBI-18054945">
        <id>P52741</id>
    </interactant>
    <interactant intactId="EBI-725997">
        <id>Q8WV44</id>
        <label>TRIM41</label>
    </interactant>
    <organismsDiffer>false</organismsDiffer>
    <experiments>3</experiments>
</comment>
<comment type="subcellular location">
    <subcellularLocation>
        <location evidence="3">Nucleus</location>
    </subcellularLocation>
</comment>
<comment type="alternative products">
    <event type="alternative splicing"/>
    <isoform>
        <id>P52741-1</id>
        <name>1</name>
        <sequence type="displayed"/>
    </isoform>
    <isoform>
        <id>P52741-2</id>
        <name>2</name>
        <sequence type="described" ref="VSP_035666"/>
    </isoform>
</comment>
<comment type="similarity">
    <text evidence="3">Belongs to the krueppel C2H2-type zinc-finger protein family.</text>
</comment>
<gene>
    <name type="primary">ZNF134</name>
</gene>
<dbReference type="EMBL" id="U09412">
    <property type="protein sequence ID" value="AAC50253.1"/>
    <property type="molecule type" value="mRNA"/>
</dbReference>
<dbReference type="EMBL" id="AK291763">
    <property type="protein sequence ID" value="BAF84452.1"/>
    <property type="molecule type" value="mRNA"/>
</dbReference>
<dbReference type="EMBL" id="AC003682">
    <property type="protein sequence ID" value="AAC24610.1"/>
    <property type="molecule type" value="Genomic_DNA"/>
</dbReference>
<dbReference type="EMBL" id="CH471135">
    <property type="protein sequence ID" value="EAW72518.1"/>
    <property type="molecule type" value="Genomic_DNA"/>
</dbReference>
<dbReference type="EMBL" id="BC112294">
    <property type="protein sequence ID" value="AAI12295.1"/>
    <property type="molecule type" value="mRNA"/>
</dbReference>
<dbReference type="EMBL" id="BC113410">
    <property type="protein sequence ID" value="AAI13411.1"/>
    <property type="molecule type" value="mRNA"/>
</dbReference>
<dbReference type="CCDS" id="CCDS42638.1">
    <molecule id="P52741-1"/>
</dbReference>
<dbReference type="PIR" id="I38599">
    <property type="entry name" value="I38599"/>
</dbReference>
<dbReference type="RefSeq" id="NP_003426.3">
    <molecule id="P52741-1"/>
    <property type="nucleotide sequence ID" value="NM_003435.5"/>
</dbReference>
<dbReference type="SMR" id="P52741"/>
<dbReference type="BioGRID" id="113488">
    <property type="interactions" value="2"/>
</dbReference>
<dbReference type="FunCoup" id="P52741">
    <property type="interactions" value="191"/>
</dbReference>
<dbReference type="IntAct" id="P52741">
    <property type="interactions" value="3"/>
</dbReference>
<dbReference type="STRING" id="9606.ENSP00000379464"/>
<dbReference type="GlyGen" id="P52741">
    <property type="glycosylation" value="1 site, 1 O-linked glycan (1 site)"/>
</dbReference>
<dbReference type="iPTMnet" id="P52741"/>
<dbReference type="PhosphoSitePlus" id="P52741"/>
<dbReference type="BioMuta" id="ZNF134"/>
<dbReference type="DMDM" id="212276482"/>
<dbReference type="jPOST" id="P52741"/>
<dbReference type="MassIVE" id="P52741"/>
<dbReference type="PaxDb" id="9606-ENSP00000379464"/>
<dbReference type="PeptideAtlas" id="P52741"/>
<dbReference type="ProteomicsDB" id="56516">
    <molecule id="P52741-1"/>
</dbReference>
<dbReference type="ProteomicsDB" id="56517">
    <molecule id="P52741-2"/>
</dbReference>
<dbReference type="Antibodypedia" id="1817">
    <property type="antibodies" value="201 antibodies from 29 providers"/>
</dbReference>
<dbReference type="DNASU" id="7693"/>
<dbReference type="Ensembl" id="ENST00000396161.10">
    <molecule id="P52741-1"/>
    <property type="protein sequence ID" value="ENSP00000379464.4"/>
    <property type="gene ID" value="ENSG00000213762.12"/>
</dbReference>
<dbReference type="GeneID" id="7693"/>
<dbReference type="KEGG" id="hsa:7693"/>
<dbReference type="MANE-Select" id="ENST00000396161.10">
    <property type="protein sequence ID" value="ENSP00000379464.4"/>
    <property type="RefSeq nucleotide sequence ID" value="NM_003435.5"/>
    <property type="RefSeq protein sequence ID" value="NP_003426.3"/>
</dbReference>
<dbReference type="UCSC" id="uc002qpn.3">
    <molecule id="P52741-1"/>
    <property type="organism name" value="human"/>
</dbReference>
<dbReference type="AGR" id="HGNC:12918"/>
<dbReference type="CTD" id="7693"/>
<dbReference type="DisGeNET" id="7693"/>
<dbReference type="GeneCards" id="ZNF134"/>
<dbReference type="HGNC" id="HGNC:12918">
    <property type="gene designation" value="ZNF134"/>
</dbReference>
<dbReference type="HPA" id="ENSG00000213762">
    <property type="expression patterns" value="Low tissue specificity"/>
</dbReference>
<dbReference type="MIM" id="604076">
    <property type="type" value="gene"/>
</dbReference>
<dbReference type="neXtProt" id="NX_P52741"/>
<dbReference type="OpenTargets" id="ENSG00000213762"/>
<dbReference type="PharmGKB" id="PA37506"/>
<dbReference type="VEuPathDB" id="HostDB:ENSG00000213762"/>
<dbReference type="eggNOG" id="KOG1721">
    <property type="taxonomic scope" value="Eukaryota"/>
</dbReference>
<dbReference type="GeneTree" id="ENSGT00940000154734"/>
<dbReference type="HOGENOM" id="CLU_002678_0_2_1"/>
<dbReference type="InParanoid" id="P52741"/>
<dbReference type="OMA" id="RVCEEPH"/>
<dbReference type="OrthoDB" id="654211at2759"/>
<dbReference type="PAN-GO" id="P52741">
    <property type="GO annotations" value="4 GO annotations based on evolutionary models"/>
</dbReference>
<dbReference type="PhylomeDB" id="P52741"/>
<dbReference type="TreeFam" id="TF342033"/>
<dbReference type="PathwayCommons" id="P52741"/>
<dbReference type="SignaLink" id="P52741"/>
<dbReference type="BioGRID-ORCS" id="7693">
    <property type="hits" value="11 hits in 1177 CRISPR screens"/>
</dbReference>
<dbReference type="GenomeRNAi" id="7693"/>
<dbReference type="Pharos" id="P52741">
    <property type="development level" value="Tdark"/>
</dbReference>
<dbReference type="PRO" id="PR:P52741"/>
<dbReference type="Proteomes" id="UP000005640">
    <property type="component" value="Chromosome 19"/>
</dbReference>
<dbReference type="RNAct" id="P52741">
    <property type="molecule type" value="protein"/>
</dbReference>
<dbReference type="Bgee" id="ENSG00000213762">
    <property type="expression patterns" value="Expressed in primordial germ cell in gonad and 165 other cell types or tissues"/>
</dbReference>
<dbReference type="ExpressionAtlas" id="P52741">
    <property type="expression patterns" value="baseline and differential"/>
</dbReference>
<dbReference type="GO" id="GO:0005654">
    <property type="term" value="C:nucleoplasm"/>
    <property type="evidence" value="ECO:0000314"/>
    <property type="project" value="HPA"/>
</dbReference>
<dbReference type="GO" id="GO:0001227">
    <property type="term" value="F:DNA-binding transcription repressor activity, RNA polymerase II-specific"/>
    <property type="evidence" value="ECO:0000318"/>
    <property type="project" value="GO_Central"/>
</dbReference>
<dbReference type="GO" id="GO:0000978">
    <property type="term" value="F:RNA polymerase II cis-regulatory region sequence-specific DNA binding"/>
    <property type="evidence" value="ECO:0000318"/>
    <property type="project" value="GO_Central"/>
</dbReference>
<dbReference type="GO" id="GO:0008270">
    <property type="term" value="F:zinc ion binding"/>
    <property type="evidence" value="ECO:0007669"/>
    <property type="project" value="UniProtKB-KW"/>
</dbReference>
<dbReference type="GO" id="GO:0000122">
    <property type="term" value="P:negative regulation of transcription by RNA polymerase II"/>
    <property type="evidence" value="ECO:0000318"/>
    <property type="project" value="GO_Central"/>
</dbReference>
<dbReference type="GO" id="GO:0001817">
    <property type="term" value="P:regulation of cytokine production"/>
    <property type="evidence" value="ECO:0000318"/>
    <property type="project" value="GO_Central"/>
</dbReference>
<dbReference type="GO" id="GO:0002682">
    <property type="term" value="P:regulation of immune system process"/>
    <property type="evidence" value="ECO:0000318"/>
    <property type="project" value="GO_Central"/>
</dbReference>
<dbReference type="FunFam" id="3.30.160.60:FF:001478">
    <property type="entry name" value="Zinc finger protein 134"/>
    <property type="match status" value="2"/>
</dbReference>
<dbReference type="FunFam" id="3.30.160.60:FF:002072">
    <property type="entry name" value="Zinc finger protein 134"/>
    <property type="match status" value="1"/>
</dbReference>
<dbReference type="FunFam" id="3.30.160.60:FF:000295">
    <property type="entry name" value="zinc finger protein 19"/>
    <property type="match status" value="1"/>
</dbReference>
<dbReference type="FunFam" id="3.30.160.60:FF:000358">
    <property type="entry name" value="zinc finger protein 24"/>
    <property type="match status" value="1"/>
</dbReference>
<dbReference type="FunFam" id="3.30.160.60:FF:000135">
    <property type="entry name" value="Zinc finger protein 358"/>
    <property type="match status" value="1"/>
</dbReference>
<dbReference type="FunFam" id="3.30.160.60:FF:000443">
    <property type="entry name" value="Zinc finger protein 41"/>
    <property type="match status" value="1"/>
</dbReference>
<dbReference type="FunFam" id="3.30.160.60:FF:001270">
    <property type="entry name" value="zinc finger protein 583 isoform X1"/>
    <property type="match status" value="1"/>
</dbReference>
<dbReference type="FunFam" id="3.30.160.60:FF:000176">
    <property type="entry name" value="zinc finger protein 70"/>
    <property type="match status" value="1"/>
</dbReference>
<dbReference type="Gene3D" id="3.30.160.60">
    <property type="entry name" value="Classic Zinc Finger"/>
    <property type="match status" value="10"/>
</dbReference>
<dbReference type="InterPro" id="IPR050826">
    <property type="entry name" value="Krueppel_C2H2_ZnFinger"/>
</dbReference>
<dbReference type="InterPro" id="IPR036236">
    <property type="entry name" value="Znf_C2H2_sf"/>
</dbReference>
<dbReference type="InterPro" id="IPR013087">
    <property type="entry name" value="Znf_C2H2_type"/>
</dbReference>
<dbReference type="PANTHER" id="PTHR24377">
    <property type="entry name" value="IP01015P-RELATED"/>
    <property type="match status" value="1"/>
</dbReference>
<dbReference type="Pfam" id="PF00096">
    <property type="entry name" value="zf-C2H2"/>
    <property type="match status" value="9"/>
</dbReference>
<dbReference type="SMART" id="SM00355">
    <property type="entry name" value="ZnF_C2H2"/>
    <property type="match status" value="10"/>
</dbReference>
<dbReference type="SUPFAM" id="SSF57667">
    <property type="entry name" value="beta-beta-alpha zinc fingers"/>
    <property type="match status" value="6"/>
</dbReference>
<dbReference type="PROSITE" id="PS00028">
    <property type="entry name" value="ZINC_FINGER_C2H2_1"/>
    <property type="match status" value="10"/>
</dbReference>
<dbReference type="PROSITE" id="PS50157">
    <property type="entry name" value="ZINC_FINGER_C2H2_2"/>
    <property type="match status" value="10"/>
</dbReference>
<keyword id="KW-0025">Alternative splicing</keyword>
<keyword id="KW-0238">DNA-binding</keyword>
<keyword id="KW-1017">Isopeptide bond</keyword>
<keyword id="KW-0479">Metal-binding</keyword>
<keyword id="KW-0539">Nucleus</keyword>
<keyword id="KW-1267">Proteomics identification</keyword>
<keyword id="KW-1185">Reference proteome</keyword>
<keyword id="KW-0677">Repeat</keyword>
<keyword id="KW-0804">Transcription</keyword>
<keyword id="KW-0805">Transcription regulation</keyword>
<keyword id="KW-0832">Ubl conjugation</keyword>
<keyword id="KW-0862">Zinc</keyword>
<keyword id="KW-0863">Zinc-finger</keyword>
<proteinExistence type="evidence at protein level"/>
<reference key="1">
    <citation type="journal article" date="1995" name="Genomics">
        <title>Isolation and fine mapping of 16 novel human zinc finger-encoding cDNAs identify putative candidate genes for developmental and malignant disorders.</title>
        <authorList>
            <person name="Tommerup N."/>
            <person name="Vissing H."/>
        </authorList>
    </citation>
    <scope>NUCLEOTIDE SEQUENCE [MRNA] (ISOFORM 2)</scope>
    <source>
        <tissue>Insulinoma</tissue>
    </source>
</reference>
<reference key="2">
    <citation type="journal article" date="2004" name="Nat. Genet.">
        <title>Complete sequencing and characterization of 21,243 full-length human cDNAs.</title>
        <authorList>
            <person name="Ota T."/>
            <person name="Suzuki Y."/>
            <person name="Nishikawa T."/>
            <person name="Otsuki T."/>
            <person name="Sugiyama T."/>
            <person name="Irie R."/>
            <person name="Wakamatsu A."/>
            <person name="Hayashi K."/>
            <person name="Sato H."/>
            <person name="Nagai K."/>
            <person name="Kimura K."/>
            <person name="Makita H."/>
            <person name="Sekine M."/>
            <person name="Obayashi M."/>
            <person name="Nishi T."/>
            <person name="Shibahara T."/>
            <person name="Tanaka T."/>
            <person name="Ishii S."/>
            <person name="Yamamoto J."/>
            <person name="Saito K."/>
            <person name="Kawai Y."/>
            <person name="Isono Y."/>
            <person name="Nakamura Y."/>
            <person name="Nagahari K."/>
            <person name="Murakami K."/>
            <person name="Yasuda T."/>
            <person name="Iwayanagi T."/>
            <person name="Wagatsuma M."/>
            <person name="Shiratori A."/>
            <person name="Sudo H."/>
            <person name="Hosoiri T."/>
            <person name="Kaku Y."/>
            <person name="Kodaira H."/>
            <person name="Kondo H."/>
            <person name="Sugawara M."/>
            <person name="Takahashi M."/>
            <person name="Kanda K."/>
            <person name="Yokoi T."/>
            <person name="Furuya T."/>
            <person name="Kikkawa E."/>
            <person name="Omura Y."/>
            <person name="Abe K."/>
            <person name="Kamihara K."/>
            <person name="Katsuta N."/>
            <person name="Sato K."/>
            <person name="Tanikawa M."/>
            <person name="Yamazaki M."/>
            <person name="Ninomiya K."/>
            <person name="Ishibashi T."/>
            <person name="Yamashita H."/>
            <person name="Murakawa K."/>
            <person name="Fujimori K."/>
            <person name="Tanai H."/>
            <person name="Kimata M."/>
            <person name="Watanabe M."/>
            <person name="Hiraoka S."/>
            <person name="Chiba Y."/>
            <person name="Ishida S."/>
            <person name="Ono Y."/>
            <person name="Takiguchi S."/>
            <person name="Watanabe S."/>
            <person name="Yosida M."/>
            <person name="Hotuta T."/>
            <person name="Kusano J."/>
            <person name="Kanehori K."/>
            <person name="Takahashi-Fujii A."/>
            <person name="Hara H."/>
            <person name="Tanase T.-O."/>
            <person name="Nomura Y."/>
            <person name="Togiya S."/>
            <person name="Komai F."/>
            <person name="Hara R."/>
            <person name="Takeuchi K."/>
            <person name="Arita M."/>
            <person name="Imose N."/>
            <person name="Musashino K."/>
            <person name="Yuuki H."/>
            <person name="Oshima A."/>
            <person name="Sasaki N."/>
            <person name="Aotsuka S."/>
            <person name="Yoshikawa Y."/>
            <person name="Matsunawa H."/>
            <person name="Ichihara T."/>
            <person name="Shiohata N."/>
            <person name="Sano S."/>
            <person name="Moriya S."/>
            <person name="Momiyama H."/>
            <person name="Satoh N."/>
            <person name="Takami S."/>
            <person name="Terashima Y."/>
            <person name="Suzuki O."/>
            <person name="Nakagawa S."/>
            <person name="Senoh A."/>
            <person name="Mizoguchi H."/>
            <person name="Goto Y."/>
            <person name="Shimizu F."/>
            <person name="Wakebe H."/>
            <person name="Hishigaki H."/>
            <person name="Watanabe T."/>
            <person name="Sugiyama A."/>
            <person name="Takemoto M."/>
            <person name="Kawakami B."/>
            <person name="Yamazaki M."/>
            <person name="Watanabe K."/>
            <person name="Kumagai A."/>
            <person name="Itakura S."/>
            <person name="Fukuzumi Y."/>
            <person name="Fujimori Y."/>
            <person name="Komiyama M."/>
            <person name="Tashiro H."/>
            <person name="Tanigami A."/>
            <person name="Fujiwara T."/>
            <person name="Ono T."/>
            <person name="Yamada K."/>
            <person name="Fujii Y."/>
            <person name="Ozaki K."/>
            <person name="Hirao M."/>
            <person name="Ohmori Y."/>
            <person name="Kawabata A."/>
            <person name="Hikiji T."/>
            <person name="Kobatake N."/>
            <person name="Inagaki H."/>
            <person name="Ikema Y."/>
            <person name="Okamoto S."/>
            <person name="Okitani R."/>
            <person name="Kawakami T."/>
            <person name="Noguchi S."/>
            <person name="Itoh T."/>
            <person name="Shigeta K."/>
            <person name="Senba T."/>
            <person name="Matsumura K."/>
            <person name="Nakajima Y."/>
            <person name="Mizuno T."/>
            <person name="Morinaga M."/>
            <person name="Sasaki M."/>
            <person name="Togashi T."/>
            <person name="Oyama M."/>
            <person name="Hata H."/>
            <person name="Watanabe M."/>
            <person name="Komatsu T."/>
            <person name="Mizushima-Sugano J."/>
            <person name="Satoh T."/>
            <person name="Shirai Y."/>
            <person name="Takahashi Y."/>
            <person name="Nakagawa K."/>
            <person name="Okumura K."/>
            <person name="Nagase T."/>
            <person name="Nomura N."/>
            <person name="Kikuchi H."/>
            <person name="Masuho Y."/>
            <person name="Yamashita R."/>
            <person name="Nakai K."/>
            <person name="Yada T."/>
            <person name="Nakamura Y."/>
            <person name="Ohara O."/>
            <person name="Isogai T."/>
            <person name="Sugano S."/>
        </authorList>
    </citation>
    <scope>NUCLEOTIDE SEQUENCE [LARGE SCALE MRNA] (ISOFORM 1)</scope>
    <source>
        <tissue>Placenta</tissue>
    </source>
</reference>
<reference key="3">
    <citation type="journal article" date="2004" name="Nature">
        <title>The DNA sequence and biology of human chromosome 19.</title>
        <authorList>
            <person name="Grimwood J."/>
            <person name="Gordon L.A."/>
            <person name="Olsen A.S."/>
            <person name="Terry A."/>
            <person name="Schmutz J."/>
            <person name="Lamerdin J.E."/>
            <person name="Hellsten U."/>
            <person name="Goodstein D."/>
            <person name="Couronne O."/>
            <person name="Tran-Gyamfi M."/>
            <person name="Aerts A."/>
            <person name="Altherr M."/>
            <person name="Ashworth L."/>
            <person name="Bajorek E."/>
            <person name="Black S."/>
            <person name="Branscomb E."/>
            <person name="Caenepeel S."/>
            <person name="Carrano A.V."/>
            <person name="Caoile C."/>
            <person name="Chan Y.M."/>
            <person name="Christensen M."/>
            <person name="Cleland C.A."/>
            <person name="Copeland A."/>
            <person name="Dalin E."/>
            <person name="Dehal P."/>
            <person name="Denys M."/>
            <person name="Detter J.C."/>
            <person name="Escobar J."/>
            <person name="Flowers D."/>
            <person name="Fotopulos D."/>
            <person name="Garcia C."/>
            <person name="Georgescu A.M."/>
            <person name="Glavina T."/>
            <person name="Gomez M."/>
            <person name="Gonzales E."/>
            <person name="Groza M."/>
            <person name="Hammon N."/>
            <person name="Hawkins T."/>
            <person name="Haydu L."/>
            <person name="Ho I."/>
            <person name="Huang W."/>
            <person name="Israni S."/>
            <person name="Jett J."/>
            <person name="Kadner K."/>
            <person name="Kimball H."/>
            <person name="Kobayashi A."/>
            <person name="Larionov V."/>
            <person name="Leem S.-H."/>
            <person name="Lopez F."/>
            <person name="Lou Y."/>
            <person name="Lowry S."/>
            <person name="Malfatti S."/>
            <person name="Martinez D."/>
            <person name="McCready P.M."/>
            <person name="Medina C."/>
            <person name="Morgan J."/>
            <person name="Nelson K."/>
            <person name="Nolan M."/>
            <person name="Ovcharenko I."/>
            <person name="Pitluck S."/>
            <person name="Pollard M."/>
            <person name="Popkie A.P."/>
            <person name="Predki P."/>
            <person name="Quan G."/>
            <person name="Ramirez L."/>
            <person name="Rash S."/>
            <person name="Retterer J."/>
            <person name="Rodriguez A."/>
            <person name="Rogers S."/>
            <person name="Salamov A."/>
            <person name="Salazar A."/>
            <person name="She X."/>
            <person name="Smith D."/>
            <person name="Slezak T."/>
            <person name="Solovyev V."/>
            <person name="Thayer N."/>
            <person name="Tice H."/>
            <person name="Tsai M."/>
            <person name="Ustaszewska A."/>
            <person name="Vo N."/>
            <person name="Wagner M."/>
            <person name="Wheeler J."/>
            <person name="Wu K."/>
            <person name="Xie G."/>
            <person name="Yang J."/>
            <person name="Dubchak I."/>
            <person name="Furey T.S."/>
            <person name="DeJong P."/>
            <person name="Dickson M."/>
            <person name="Gordon D."/>
            <person name="Eichler E.E."/>
            <person name="Pennacchio L.A."/>
            <person name="Richardson P."/>
            <person name="Stubbs L."/>
            <person name="Rokhsar D.S."/>
            <person name="Myers R.M."/>
            <person name="Rubin E.M."/>
            <person name="Lucas S.M."/>
        </authorList>
    </citation>
    <scope>NUCLEOTIDE SEQUENCE [LARGE SCALE GENOMIC DNA]</scope>
</reference>
<reference key="4">
    <citation type="submission" date="2005-07" db="EMBL/GenBank/DDBJ databases">
        <authorList>
            <person name="Mural R.J."/>
            <person name="Istrail S."/>
            <person name="Sutton G.G."/>
            <person name="Florea L."/>
            <person name="Halpern A.L."/>
            <person name="Mobarry C.M."/>
            <person name="Lippert R."/>
            <person name="Walenz B."/>
            <person name="Shatkay H."/>
            <person name="Dew I."/>
            <person name="Miller J.R."/>
            <person name="Flanigan M.J."/>
            <person name="Edwards N.J."/>
            <person name="Bolanos R."/>
            <person name="Fasulo D."/>
            <person name="Halldorsson B.V."/>
            <person name="Hannenhalli S."/>
            <person name="Turner R."/>
            <person name="Yooseph S."/>
            <person name="Lu F."/>
            <person name="Nusskern D.R."/>
            <person name="Shue B.C."/>
            <person name="Zheng X.H."/>
            <person name="Zhong F."/>
            <person name="Delcher A.L."/>
            <person name="Huson D.H."/>
            <person name="Kravitz S.A."/>
            <person name="Mouchard L."/>
            <person name="Reinert K."/>
            <person name="Remington K.A."/>
            <person name="Clark A.G."/>
            <person name="Waterman M.S."/>
            <person name="Eichler E.E."/>
            <person name="Adams M.D."/>
            <person name="Hunkapiller M.W."/>
            <person name="Myers E.W."/>
            <person name="Venter J.C."/>
        </authorList>
    </citation>
    <scope>NUCLEOTIDE SEQUENCE [LARGE SCALE GENOMIC DNA]</scope>
</reference>
<reference key="5">
    <citation type="journal article" date="2004" name="Genome Res.">
        <title>The status, quality, and expansion of the NIH full-length cDNA project: the Mammalian Gene Collection (MGC).</title>
        <authorList>
            <consortium name="The MGC Project Team"/>
        </authorList>
    </citation>
    <scope>NUCLEOTIDE SEQUENCE [LARGE SCALE MRNA] (ISOFORM 1)</scope>
    <source>
        <tissue>Brain</tissue>
    </source>
</reference>
<reference key="6">
    <citation type="journal article" date="2017" name="Nat. Struct. Mol. Biol.">
        <title>Site-specific mapping of the human SUMO proteome reveals co-modification with phosphorylation.</title>
        <authorList>
            <person name="Hendriks I.A."/>
            <person name="Lyon D."/>
            <person name="Young C."/>
            <person name="Jensen L.J."/>
            <person name="Vertegaal A.C."/>
            <person name="Nielsen M.L."/>
        </authorList>
    </citation>
    <scope>SUMOYLATION [LARGE SCALE ANALYSIS] AT LYS-20; LYS-135 AND LYS-139</scope>
    <scope>IDENTIFICATION BY MASS SPECTROMETRY [LARGE SCALE ANALYSIS]</scope>
</reference>
<feature type="chain" id="PRO_0000047418" description="Zinc finger protein 134">
    <location>
        <begin position="1"/>
        <end position="427"/>
    </location>
</feature>
<feature type="zinc finger region" description="C2H2-type 1" evidence="1">
    <location>
        <begin position="50"/>
        <end position="72"/>
    </location>
</feature>
<feature type="zinc finger region" description="C2H2-type 2; degenerate" evidence="1">
    <location>
        <begin position="78"/>
        <end position="100"/>
    </location>
</feature>
<feature type="zinc finger region" description="C2H2-type 3" evidence="1">
    <location>
        <begin position="176"/>
        <end position="198"/>
    </location>
</feature>
<feature type="zinc finger region" description="C2H2-type 4" evidence="1">
    <location>
        <begin position="204"/>
        <end position="226"/>
    </location>
</feature>
<feature type="zinc finger region" description="C2H2-type 5" evidence="1">
    <location>
        <begin position="232"/>
        <end position="254"/>
    </location>
</feature>
<feature type="zinc finger region" description="C2H2-type 6" evidence="1">
    <location>
        <begin position="260"/>
        <end position="282"/>
    </location>
</feature>
<feature type="zinc finger region" description="C2H2-type 7" evidence="1">
    <location>
        <begin position="288"/>
        <end position="310"/>
    </location>
</feature>
<feature type="zinc finger region" description="C2H2-type 8" evidence="1">
    <location>
        <begin position="316"/>
        <end position="338"/>
    </location>
</feature>
<feature type="zinc finger region" description="C2H2-type 9" evidence="1">
    <location>
        <begin position="344"/>
        <end position="366"/>
    </location>
</feature>
<feature type="zinc finger region" description="C2H2-type 10" evidence="1">
    <location>
        <begin position="372"/>
        <end position="394"/>
    </location>
</feature>
<feature type="zinc finger region" description="C2H2-type 11" evidence="1">
    <location>
        <begin position="400"/>
        <end position="422"/>
    </location>
</feature>
<feature type="cross-link" description="Glycyl lysine isopeptide (Lys-Gly) (interchain with G-Cter in SUMO2)" evidence="4">
    <location>
        <position position="20"/>
    </location>
</feature>
<feature type="cross-link" description="Glycyl lysine isopeptide (Lys-Gly) (interchain with G-Cter in SUMO2)" evidence="4">
    <location>
        <position position="135"/>
    </location>
</feature>
<feature type="cross-link" description="Glycyl lysine isopeptide (Lys-Gly) (interchain with G-Cter in SUMO2)" evidence="4">
    <location>
        <position position="139"/>
    </location>
</feature>
<feature type="splice variant" id="VSP_035666" description="In isoform 2." evidence="2">
    <original>MTLVTAGGAWTGPGCWHEVKDEESSSEQSISIAVSHVNTSKAGLPAQTALPCDICGPILKDILHLDEHQGTHHGLKLHTCGACGRQFWFSA</original>
    <variation>MWGMWETILVQC</variation>
    <location>
        <begin position="1"/>
        <end position="91"/>
    </location>
</feature>
<feature type="sequence variant" id="VAR_052771" description="In dbSNP:rs10414451.">
    <original>I</original>
    <variation>T</variation>
    <location>
        <position position="30"/>
    </location>
</feature>
<feature type="sequence variant" id="VAR_052772" description="In dbSNP:rs10413455.">
    <original>A</original>
    <variation>T</variation>
    <location>
        <position position="46"/>
    </location>
</feature>
<feature type="sequence variant" id="VAR_052773" description="In dbSNP:rs34034473.">
    <original>S</original>
    <variation>R</variation>
    <location>
        <position position="207"/>
    </location>
</feature>
<sequence length="427" mass="48480">MTLVTAGGAWTGPGCWHEVKDEESSSEQSISIAVSHVNTSKAGLPAQTALPCDICGPILKDILHLDEHQGTHHGLKLHTCGACGRQFWFSANLHQYQKCYSIEQPLRRDKSEASIVKNCTVSKEPHPSEKPFTCKEEQKNFQATLGGCQQKAIHSKRKTHRSTESGDAFHGEQMHYKCSECGKAFSRKDTLVQHQRIHSGEKPYECSECGKAFSRKATLVQHQRIHTGERPYECSECGKTFSRKDNLTQHKRIHTGEMPYKCNECGKYFSHHSNLIVHQRVHNGARPYKCSDCGKVFRHKSTLVQHESIHTGENPYDCSDCGKSFGHKYTLIKHQRIHTESKPFECIECGKFFSRSSDYIAHQRVHTGERPFVCSKCGKDFIRTSHLVRHQRVHTGERPYECSECGKAYSLSSHLNRHQKVHTAGRL</sequence>